<sequence length="166" mass="18495">MRLILLSSLLLLGIFLANGHEEDPDGKVLNSLIDTLMHLQKLYANLKYSFLTVHRARSFGSGSERLYVTNKEIKNFEALRQICEQAEGHIPSPQLENQNKAFANVLERHGKEAYLVVGDSANFTNWAAGEPNKAAGTCVKADTHGSWHSASCDDNLLVVCEFYFIL</sequence>
<protein>
    <recommendedName>
        <fullName>Phospholipase A2 inhibitor clone 10</fullName>
        <shortName>alpha-PLI</shortName>
    </recommendedName>
</protein>
<reference key="1">
    <citation type="submission" date="2008-01" db="EMBL/GenBank/DDBJ databases">
        <title>A profile of the phospholipase A2 inhibitors of the alpha class prospected in Brazilian Crotalidae snakes: structural and phylogenetic analysis.</title>
        <authorList>
            <person name="Estevao-Costa M.I."/>
            <person name="Costa M.A.F."/>
            <person name="Mudado M.A."/>
            <person name="Franco G.R."/>
            <person name="Fortes-Dias C.L."/>
        </authorList>
    </citation>
    <scope>NUCLEOTIDE SEQUENCE [MRNA]</scope>
    <source>
        <tissue>Liver</tissue>
    </source>
</reference>
<accession>B1A4Q0</accession>
<keyword id="KW-0106">Calcium</keyword>
<keyword id="KW-1015">Disulfide bond</keyword>
<keyword id="KW-0325">Glycoprotein</keyword>
<keyword id="KW-0430">Lectin</keyword>
<keyword id="KW-0593">Phospholipase A2 inhibitor</keyword>
<keyword id="KW-0964">Secreted</keyword>
<keyword id="KW-0732">Signal</keyword>
<proteinExistence type="evidence at transcript level"/>
<dbReference type="EMBL" id="EU421924">
    <property type="protein sequence ID" value="ABZ82341.1"/>
    <property type="molecule type" value="mRNA"/>
</dbReference>
<dbReference type="SMR" id="B1A4Q0"/>
<dbReference type="GO" id="GO:0005576">
    <property type="term" value="C:extracellular region"/>
    <property type="evidence" value="ECO:0007669"/>
    <property type="project" value="UniProtKB-SubCell"/>
</dbReference>
<dbReference type="GO" id="GO:0030246">
    <property type="term" value="F:carbohydrate binding"/>
    <property type="evidence" value="ECO:0007669"/>
    <property type="project" value="UniProtKB-KW"/>
</dbReference>
<dbReference type="GO" id="GO:0019834">
    <property type="term" value="F:phospholipase A2 inhibitor activity"/>
    <property type="evidence" value="ECO:0007669"/>
    <property type="project" value="UniProtKB-KW"/>
</dbReference>
<dbReference type="Gene3D" id="3.10.100.10">
    <property type="entry name" value="Mannose-Binding Protein A, subunit A"/>
    <property type="match status" value="1"/>
</dbReference>
<dbReference type="InterPro" id="IPR001304">
    <property type="entry name" value="C-type_lectin-like"/>
</dbReference>
<dbReference type="InterPro" id="IPR016186">
    <property type="entry name" value="C-type_lectin-like/link_sf"/>
</dbReference>
<dbReference type="InterPro" id="IPR018378">
    <property type="entry name" value="C-type_lectin_CS"/>
</dbReference>
<dbReference type="InterPro" id="IPR016187">
    <property type="entry name" value="CTDL_fold"/>
</dbReference>
<dbReference type="Pfam" id="PF00059">
    <property type="entry name" value="Lectin_C"/>
    <property type="match status" value="1"/>
</dbReference>
<dbReference type="SUPFAM" id="SSF56436">
    <property type="entry name" value="C-type lectin-like"/>
    <property type="match status" value="1"/>
</dbReference>
<dbReference type="PROSITE" id="PS00615">
    <property type="entry name" value="C_TYPE_LECTIN_1"/>
    <property type="match status" value="1"/>
</dbReference>
<dbReference type="PROSITE" id="PS50041">
    <property type="entry name" value="C_TYPE_LECTIN_2"/>
    <property type="match status" value="1"/>
</dbReference>
<name>PLIAA_BOTMO</name>
<comment type="function">
    <text evidence="1">This phospholipase A2 inhibitor binds directly phospholipase A2 in the presence or absence of calcium.</text>
</comment>
<comment type="subunit">
    <text evidence="2">Homotrimer; non-covalently linked.</text>
</comment>
<comment type="subcellular location">
    <subcellularLocation>
        <location evidence="7">Secreted</location>
    </subcellularLocation>
    <text evidence="6">Secreted in plasma.</text>
</comment>
<comment type="tissue specificity">
    <text evidence="7">Expressed by the liver.</text>
</comment>
<comment type="similarity">
    <text evidence="6">Belongs to the alpha-type phospholipase A2 inhibitor family.</text>
</comment>
<feature type="signal peptide" evidence="1">
    <location>
        <begin position="1"/>
        <end position="19"/>
    </location>
</feature>
<feature type="chain" id="PRO_0000356345" description="Phospholipase A2 inhibitor clone 10">
    <location>
        <begin position="20"/>
        <end position="166"/>
    </location>
</feature>
<feature type="domain" description="C-type lectin" evidence="5">
    <location>
        <begin position="46"/>
        <end position="161"/>
    </location>
</feature>
<feature type="glycosylation site" description="N-linked (GlcNAc...) asparagine" evidence="4">
    <location>
        <position position="122"/>
    </location>
</feature>
<feature type="disulfide bond" evidence="3">
    <location>
        <begin position="83"/>
        <end position="160"/>
    </location>
</feature>
<feature type="disulfide bond" evidence="3">
    <location>
        <begin position="138"/>
        <end position="152"/>
    </location>
</feature>
<organism>
    <name type="scientific">Bothrops moojeni</name>
    <name type="common">Lance-headed viper</name>
    <name type="synonym">Caissaca</name>
    <dbReference type="NCBI Taxonomy" id="98334"/>
    <lineage>
        <taxon>Eukaryota</taxon>
        <taxon>Metazoa</taxon>
        <taxon>Chordata</taxon>
        <taxon>Craniata</taxon>
        <taxon>Vertebrata</taxon>
        <taxon>Euteleostomi</taxon>
        <taxon>Lepidosauria</taxon>
        <taxon>Squamata</taxon>
        <taxon>Bifurcata</taxon>
        <taxon>Unidentata</taxon>
        <taxon>Episquamata</taxon>
        <taxon>Toxicofera</taxon>
        <taxon>Serpentes</taxon>
        <taxon>Colubroidea</taxon>
        <taxon>Viperidae</taxon>
        <taxon>Crotalinae</taxon>
        <taxon>Bothrops</taxon>
    </lineage>
</organism>
<evidence type="ECO:0000250" key="1"/>
<evidence type="ECO:0000250" key="2">
    <source>
        <dbReference type="UniProtKB" id="A1XRN2"/>
    </source>
</evidence>
<evidence type="ECO:0000250" key="3">
    <source>
        <dbReference type="UniProtKB" id="P21755"/>
    </source>
</evidence>
<evidence type="ECO:0000255" key="4"/>
<evidence type="ECO:0000255" key="5">
    <source>
        <dbReference type="PROSITE-ProRule" id="PRU00040"/>
    </source>
</evidence>
<evidence type="ECO:0000305" key="6"/>
<evidence type="ECO:0000305" key="7">
    <source ref="1"/>
</evidence>